<keyword id="KW-0067">ATP-binding</keyword>
<keyword id="KW-0238">DNA-binding</keyword>
<keyword id="KW-0479">Metal-binding</keyword>
<keyword id="KW-0547">Nucleotide-binding</keyword>
<keyword id="KW-0678">Repressor</keyword>
<keyword id="KW-0804">Transcription</keyword>
<keyword id="KW-0805">Transcription regulation</keyword>
<keyword id="KW-0862">Zinc</keyword>
<keyword id="KW-0863">Zinc-finger</keyword>
<reference key="1">
    <citation type="journal article" date="2004" name="Nat. Genet.">
        <title>Evidence in the Legionella pneumophila genome for exploitation of host cell functions and high genome plasticity.</title>
        <authorList>
            <person name="Cazalet C."/>
            <person name="Rusniok C."/>
            <person name="Brueggemann H."/>
            <person name="Zidane N."/>
            <person name="Magnier A."/>
            <person name="Ma L."/>
            <person name="Tichit M."/>
            <person name="Jarraud S."/>
            <person name="Bouchier C."/>
            <person name="Vandenesch F."/>
            <person name="Kunst F."/>
            <person name="Etienne J."/>
            <person name="Glaser P."/>
            <person name="Buchrieser C."/>
        </authorList>
    </citation>
    <scope>NUCLEOTIDE SEQUENCE [LARGE SCALE GENOMIC DNA]</scope>
    <source>
        <strain>Paris</strain>
    </source>
</reference>
<protein>
    <recommendedName>
        <fullName evidence="1">Transcriptional repressor NrdR</fullName>
    </recommendedName>
</protein>
<proteinExistence type="inferred from homology"/>
<accession>Q5X721</accession>
<feature type="chain" id="PRO_0000182310" description="Transcriptional repressor NrdR">
    <location>
        <begin position="1"/>
        <end position="155"/>
    </location>
</feature>
<feature type="domain" description="ATP-cone" evidence="1">
    <location>
        <begin position="49"/>
        <end position="139"/>
    </location>
</feature>
<feature type="zinc finger region" evidence="1">
    <location>
        <begin position="3"/>
        <end position="34"/>
    </location>
</feature>
<dbReference type="EMBL" id="CR628336">
    <property type="protein sequence ID" value="CAH11940.1"/>
    <property type="molecule type" value="Genomic_DNA"/>
</dbReference>
<dbReference type="RefSeq" id="WP_010946463.1">
    <property type="nucleotide sequence ID" value="NC_006368.1"/>
</dbReference>
<dbReference type="SMR" id="Q5X721"/>
<dbReference type="GeneID" id="57034719"/>
<dbReference type="KEGG" id="lpp:lpp0792"/>
<dbReference type="LegioList" id="lpp0792"/>
<dbReference type="HOGENOM" id="CLU_108412_0_0_6"/>
<dbReference type="GO" id="GO:0005524">
    <property type="term" value="F:ATP binding"/>
    <property type="evidence" value="ECO:0007669"/>
    <property type="project" value="UniProtKB-KW"/>
</dbReference>
<dbReference type="GO" id="GO:0003677">
    <property type="term" value="F:DNA binding"/>
    <property type="evidence" value="ECO:0007669"/>
    <property type="project" value="UniProtKB-KW"/>
</dbReference>
<dbReference type="GO" id="GO:0008270">
    <property type="term" value="F:zinc ion binding"/>
    <property type="evidence" value="ECO:0007669"/>
    <property type="project" value="UniProtKB-UniRule"/>
</dbReference>
<dbReference type="GO" id="GO:0045892">
    <property type="term" value="P:negative regulation of DNA-templated transcription"/>
    <property type="evidence" value="ECO:0007669"/>
    <property type="project" value="UniProtKB-UniRule"/>
</dbReference>
<dbReference type="HAMAP" id="MF_00440">
    <property type="entry name" value="NrdR"/>
    <property type="match status" value="1"/>
</dbReference>
<dbReference type="InterPro" id="IPR005144">
    <property type="entry name" value="ATP-cone_dom"/>
</dbReference>
<dbReference type="InterPro" id="IPR055173">
    <property type="entry name" value="NrdR-like_N"/>
</dbReference>
<dbReference type="InterPro" id="IPR003796">
    <property type="entry name" value="RNR_NrdR-like"/>
</dbReference>
<dbReference type="NCBIfam" id="TIGR00244">
    <property type="entry name" value="transcriptional regulator NrdR"/>
    <property type="match status" value="1"/>
</dbReference>
<dbReference type="PANTHER" id="PTHR30455">
    <property type="entry name" value="TRANSCRIPTIONAL REPRESSOR NRDR"/>
    <property type="match status" value="1"/>
</dbReference>
<dbReference type="PANTHER" id="PTHR30455:SF2">
    <property type="entry name" value="TRANSCRIPTIONAL REPRESSOR NRDR"/>
    <property type="match status" value="1"/>
</dbReference>
<dbReference type="Pfam" id="PF03477">
    <property type="entry name" value="ATP-cone"/>
    <property type="match status" value="1"/>
</dbReference>
<dbReference type="Pfam" id="PF22811">
    <property type="entry name" value="Zn_ribbon_NrdR"/>
    <property type="match status" value="1"/>
</dbReference>
<dbReference type="PROSITE" id="PS51161">
    <property type="entry name" value="ATP_CONE"/>
    <property type="match status" value="1"/>
</dbReference>
<organism>
    <name type="scientific">Legionella pneumophila (strain Paris)</name>
    <dbReference type="NCBI Taxonomy" id="297246"/>
    <lineage>
        <taxon>Bacteria</taxon>
        <taxon>Pseudomonadati</taxon>
        <taxon>Pseudomonadota</taxon>
        <taxon>Gammaproteobacteria</taxon>
        <taxon>Legionellales</taxon>
        <taxon>Legionellaceae</taxon>
        <taxon>Legionella</taxon>
    </lineage>
</organism>
<evidence type="ECO:0000255" key="1">
    <source>
        <dbReference type="HAMAP-Rule" id="MF_00440"/>
    </source>
</evidence>
<sequence>MYCPFCHAEETKVVDSRLVADGAQVRRRRECLECHERFTTFETAELIMPLIIKRDGRREPFHIDNLRSGMLRALEKRPVSVDDLEKAIISITEEIRRRGEREIDSQVVGELVMKELFRLDHVAYVRFASVYKRFKDVSDFRQTIDQMKNEDKEKS</sequence>
<gene>
    <name evidence="1" type="primary">nrdR</name>
    <name type="ordered locus">lpp0792</name>
</gene>
<name>NRDR_LEGPA</name>
<comment type="function">
    <text evidence="1">Negatively regulates transcription of bacterial ribonucleotide reductase nrd genes and operons by binding to NrdR-boxes.</text>
</comment>
<comment type="cofactor">
    <cofactor evidence="1">
        <name>Zn(2+)</name>
        <dbReference type="ChEBI" id="CHEBI:29105"/>
    </cofactor>
    <text evidence="1">Binds 1 zinc ion.</text>
</comment>
<comment type="similarity">
    <text evidence="1">Belongs to the NrdR family.</text>
</comment>